<organism>
    <name type="scientific">Comamonas testosteroni</name>
    <name type="common">Pseudomonas testosteroni</name>
    <dbReference type="NCBI Taxonomy" id="285"/>
    <lineage>
        <taxon>Bacteria</taxon>
        <taxon>Pseudomonadati</taxon>
        <taxon>Pseudomonadota</taxon>
        <taxon>Betaproteobacteria</taxon>
        <taxon>Burkholderiales</taxon>
        <taxon>Comamonadaceae</taxon>
        <taxon>Comamonas</taxon>
    </lineage>
</organism>
<accession>P94679</accession>
<dbReference type="EC" id="1.14.14.-"/>
<dbReference type="EMBL" id="AH010657">
    <property type="protein sequence ID" value="AAC44804.1"/>
    <property type="molecule type" value="Genomic_DNA"/>
</dbReference>
<dbReference type="SMR" id="P94679"/>
<dbReference type="KEGG" id="ag:AAC44804"/>
<dbReference type="BioCyc" id="MetaCyc:TSAMCOTE-MONOMER"/>
<dbReference type="GO" id="GO:0051537">
    <property type="term" value="F:2 iron, 2 sulfur cluster binding"/>
    <property type="evidence" value="ECO:0007669"/>
    <property type="project" value="UniProtKB-KW"/>
</dbReference>
<dbReference type="GO" id="GO:0046872">
    <property type="term" value="F:metal ion binding"/>
    <property type="evidence" value="ECO:0007669"/>
    <property type="project" value="UniProtKB-KW"/>
</dbReference>
<dbReference type="GO" id="GO:0018652">
    <property type="term" value="F:toluene-sulfonate methyl-monooxygenase activity"/>
    <property type="evidence" value="ECO:0007669"/>
    <property type="project" value="RHEA"/>
</dbReference>
<dbReference type="GO" id="GO:0009056">
    <property type="term" value="P:catabolic process"/>
    <property type="evidence" value="ECO:0007669"/>
    <property type="project" value="UniProtKB-KW"/>
</dbReference>
<dbReference type="CDD" id="cd08878">
    <property type="entry name" value="RHO_alpha_C_DMO-like"/>
    <property type="match status" value="1"/>
</dbReference>
<dbReference type="Gene3D" id="3.90.380.10">
    <property type="entry name" value="Naphthalene 1,2-dioxygenase Alpha Subunit, Chain A, domain 1"/>
    <property type="match status" value="1"/>
</dbReference>
<dbReference type="Gene3D" id="2.102.10.10">
    <property type="entry name" value="Rieske [2Fe-2S] iron-sulphur domain"/>
    <property type="match status" value="1"/>
</dbReference>
<dbReference type="InterPro" id="IPR050584">
    <property type="entry name" value="Cholesterol_7-desaturase"/>
</dbReference>
<dbReference type="InterPro" id="IPR017941">
    <property type="entry name" value="Rieske_2Fe-2S"/>
</dbReference>
<dbReference type="InterPro" id="IPR036922">
    <property type="entry name" value="Rieske_2Fe-2S_sf"/>
</dbReference>
<dbReference type="InterPro" id="IPR044043">
    <property type="entry name" value="VanA_C_cat"/>
</dbReference>
<dbReference type="PANTHER" id="PTHR21266:SF60">
    <property type="entry name" value="3-KETOSTEROID-9-ALPHA-MONOOXYGENASE, OXYGENASE COMPONENT"/>
    <property type="match status" value="1"/>
</dbReference>
<dbReference type="PANTHER" id="PTHR21266">
    <property type="entry name" value="IRON-SULFUR DOMAIN CONTAINING PROTEIN"/>
    <property type="match status" value="1"/>
</dbReference>
<dbReference type="Pfam" id="PF00355">
    <property type="entry name" value="Rieske"/>
    <property type="match status" value="1"/>
</dbReference>
<dbReference type="Pfam" id="PF19112">
    <property type="entry name" value="VanA_C"/>
    <property type="match status" value="1"/>
</dbReference>
<dbReference type="SUPFAM" id="SSF55961">
    <property type="entry name" value="Bet v1-like"/>
    <property type="match status" value="1"/>
</dbReference>
<dbReference type="SUPFAM" id="SSF50022">
    <property type="entry name" value="ISP domain"/>
    <property type="match status" value="1"/>
</dbReference>
<dbReference type="PROSITE" id="PS51296">
    <property type="entry name" value="RIESKE"/>
    <property type="match status" value="1"/>
</dbReference>
<proteinExistence type="evidence at protein level"/>
<keyword id="KW-0001">2Fe-2S</keyword>
<keyword id="KW-0058">Aromatic hydrocarbons catabolism</keyword>
<keyword id="KW-0903">Direct protein sequencing</keyword>
<keyword id="KW-0274">FAD</keyword>
<keyword id="KW-0285">Flavoprotein</keyword>
<keyword id="KW-0408">Iron</keyword>
<keyword id="KW-0411">Iron-sulfur</keyword>
<keyword id="KW-0479">Metal-binding</keyword>
<keyword id="KW-0503">Monooxygenase</keyword>
<keyword id="KW-0560">Oxidoreductase</keyword>
<keyword id="KW-0614">Plasmid</keyword>
<geneLocation type="plasmid">
    <name>pTSA</name>
</geneLocation>
<feature type="chain" id="PRO_0000419119" description="Toluene-4-sulfonate monooxygenase system iron-sulfur subunit TsaM1">
    <location>
        <begin position="1"/>
        <end position="347"/>
    </location>
</feature>
<feature type="domain" description="Rieske" evidence="1">
    <location>
        <begin position="7"/>
        <end position="109"/>
    </location>
</feature>
<feature type="binding site" evidence="1">
    <location>
        <position position="48"/>
    </location>
    <ligand>
        <name>[2Fe-2S] cluster</name>
        <dbReference type="ChEBI" id="CHEBI:190135"/>
    </ligand>
</feature>
<feature type="binding site" evidence="1">
    <location>
        <position position="50"/>
    </location>
    <ligand>
        <name>[2Fe-2S] cluster</name>
        <dbReference type="ChEBI" id="CHEBI:190135"/>
    </ligand>
</feature>
<feature type="binding site" evidence="1">
    <location>
        <position position="67"/>
    </location>
    <ligand>
        <name>[2Fe-2S] cluster</name>
        <dbReference type="ChEBI" id="CHEBI:190135"/>
    </ligand>
</feature>
<feature type="binding site" evidence="1">
    <location>
        <position position="70"/>
    </location>
    <ligand>
        <name>[2Fe-2S] cluster</name>
        <dbReference type="ChEBI" id="CHEBI:190135"/>
    </ligand>
</feature>
<feature type="sequence conflict" description="In Ref. 4; AA sequence and 5; AA sequence." evidence="4" ref="4 5">
    <original>RNC</original>
    <variation>INN</variation>
    <location>
        <begin position="4"/>
        <end position="6"/>
    </location>
</feature>
<feature type="sequence conflict" description="In Ref. 4; AA sequence." evidence="4" ref="4">
    <original>W</original>
    <variation>A</variation>
    <location>
        <position position="12"/>
    </location>
</feature>
<name>TSAM1_COMTE</name>
<reference key="1">
    <citation type="journal article" date="1997" name="J. Bacteriol.">
        <title>Characterization of the p-toluenesulfonate operon tsaMBCD and tsaR in Comamonas testosteroni T-2.</title>
        <authorList>
            <person name="Junker F."/>
            <person name="Kiewitz R."/>
            <person name="Cook A.M."/>
        </authorList>
    </citation>
    <scope>NUCLEOTIDE SEQUENCE [GENOMIC DNA]</scope>
    <scope>PROTEIN SEQUENCE OF 1-24 AND 136-162</scope>
    <source>
        <strain>DSM 6577 / T-2</strain>
    </source>
</reference>
<reference key="2">
    <citation type="journal article" date="2001" name="Appl. Environ. Microbiol.">
        <title>Map of the IncP1beta plasmid pTSA encoding the widespread genes (tsa) for p-toluenesulfonate degradation in Comamonas testosteroni T-2.</title>
        <authorList>
            <person name="Tralau T."/>
            <person name="Cook A.M."/>
            <person name="Ruff J."/>
        </authorList>
    </citation>
    <scope>NUCLEOTIDE SEQUENCE [GENOMIC DNA]</scope>
    <source>
        <strain>DSM 6577 / T-2</strain>
    </source>
</reference>
<reference key="3">
    <citation type="journal article" date="2004" name="Biochem. J.">
        <title>A novel outer-membrane anion channel (porin) as part of a putatively two-component transport system for 4-toluenesulphonate in Comamonas testosteroni T-2.</title>
        <authorList>
            <person name="Mampel J."/>
            <person name="Maier E."/>
            <person name="Tralau T."/>
            <person name="Ruff J."/>
            <person name="Benz R."/>
            <person name="Cook A.M."/>
        </authorList>
    </citation>
    <scope>NUCLEOTIDE SEQUENCE [GENOMIC DNA]</scope>
    <source>
        <strain>DSM 6577 / T-2</strain>
    </source>
</reference>
<reference key="4">
    <citation type="journal article" date="1991" name="J. Bacteriol.">
        <title>4-Toluene sulfonate methyl-monooxygenase from Comamonas testosteroni T-2: purification and some properties of the oxygenase component.</title>
        <authorList>
            <person name="Locher H.H."/>
            <person name="Leisinger T."/>
            <person name="Cook A.M."/>
        </authorList>
    </citation>
    <scope>PROTEIN SEQUENCE OF 1-17</scope>
    <scope>FUNCTION</scope>
    <scope>CATALYTIC ACTIVITY</scope>
    <scope>SUBSTRATE SPECIFICITY</scope>
    <scope>SUBUNIT</scope>
</reference>
<reference key="5">
    <citation type="journal article" date="1991" name="J. Gen. Microbiol.">
        <title>Degradation of p-toluic acid (p-toluenecarboxylic acid) and p-toluenesulphonic acid via oxygenation of the methyl sidechain is initiated by the same set of enzymes in Comamonas testosteroni T-2.</title>
        <authorList>
            <person name="Locher H.H."/>
            <person name="Malli C."/>
            <person name="Hooper S.W."/>
            <person name="Vorherr T."/>
            <person name="Leisinger T."/>
            <person name="Cook A.M."/>
        </authorList>
    </citation>
    <scope>PROTEIN SEQUENCE OF 1-11</scope>
    <scope>FUNCTION</scope>
    <scope>SUBSTRATE SPECIFICITY</scope>
</reference>
<protein>
    <recommendedName>
        <fullName>Toluene-4-sulfonate monooxygenase system iron-sulfur subunit TsaM1</fullName>
        <ecNumber>1.14.14.-</ecNumber>
    </recommendedName>
    <alternativeName>
        <fullName>TS methylmonooxygenase system, oxygenase M</fullName>
    </alternativeName>
    <alternativeName>
        <fullName>Toluenesulfonate methyl-monooxygenase oxygenase component TsaM1</fullName>
    </alternativeName>
</protein>
<sequence length="347" mass="39557">MFIRNCWYVAAWDTEIPAEGLFHRTLLNEPVLLYRDTQGRVVALENRCCHRSAPLHIGRQEGDCVRCLYHGLKFNPSGACVEIPGQEQIPPKTCIKSYPVVERNRLVWIWMGDPARANPDDIVDYFWHDSPEWRMKPGYIHYQANYKLIVDNLLDFTHLAWVHPTTLGTDSAASLKPVIERDTTGTGKLTITRWYLNDDMSNLHKGVAKFEGKADRWQIYQWSPPALLRMDTGSAPTGTGAPEGRRVPEAVQFRHTSIQTPETETTSHYWFCQARNFDLDDEALTEKIYQGVVVAFEEDRTMIEAHEKILSQVPDRPMVPIAADAGLNQGRWLLDRLLKAENGGTAP</sequence>
<comment type="function">
    <text evidence="2 3">Involved in the toluene-4-sulfonate degradation pathway. Does not discriminate between the sulfonate and the carboxyl substituents and can also be involved in the p-toluenecarboxylate degradation pathway. Can use toluene-4-sulfonate, p-toluate, m-toluate and 4-ethylbenzoate as substrates, but not p-xylene, toluene and p-cresol. Also catalyzes the demethylation of 4-methoxybenzoate to 4-hydroxybenzoate.</text>
</comment>
<comment type="catalytic activity">
    <reaction evidence="2">
        <text>toluene-4-sulfonate + NADH + O2 + H(+) = 4-(hydroxymethyl)benzenesulfonate + NAD(+) + H2O</text>
        <dbReference type="Rhea" id="RHEA:51024"/>
        <dbReference type="ChEBI" id="CHEBI:11944"/>
        <dbReference type="ChEBI" id="CHEBI:15377"/>
        <dbReference type="ChEBI" id="CHEBI:15378"/>
        <dbReference type="ChEBI" id="CHEBI:15379"/>
        <dbReference type="ChEBI" id="CHEBI:27023"/>
        <dbReference type="ChEBI" id="CHEBI:57540"/>
        <dbReference type="ChEBI" id="CHEBI:57945"/>
    </reaction>
</comment>
<comment type="cofactor">
    <cofactor>
        <name>[2Fe-2S] cluster</name>
        <dbReference type="ChEBI" id="CHEBI:190135"/>
    </cofactor>
    <text>Binds 1 [2Fe-2S] cluster per subunit.</text>
</comment>
<comment type="subunit">
    <text evidence="2">Homotetramer. Part of the p-toluenesulfonate methyl-monooxygenase complex TsaBM, comprising the reductase TsaB and the oxygenase TsaM.</text>
</comment>
<evidence type="ECO:0000255" key="1">
    <source>
        <dbReference type="PROSITE-ProRule" id="PRU00628"/>
    </source>
</evidence>
<evidence type="ECO:0000269" key="2">
    <source>
    </source>
</evidence>
<evidence type="ECO:0000269" key="3">
    <source ref="5"/>
</evidence>
<evidence type="ECO:0000305" key="4"/>
<gene>
    <name type="primary">tsaM1</name>
    <name type="synonym">tsaM</name>
</gene>